<evidence type="ECO:0000250" key="1"/>
<evidence type="ECO:0000255" key="2"/>
<evidence type="ECO:0000305" key="3"/>
<protein>
    <recommendedName>
        <fullName>Golgi apparatus membrane protein TVP23</fullName>
    </recommendedName>
</protein>
<gene>
    <name type="primary">TVP23</name>
    <name type="ordered locus">YALI0D25036g</name>
</gene>
<sequence>MTLWQRLSESSHPVALVFFLAFRLGALFTYMFGLLFTDKFVLMFVLVVLLLAADFWNVKNIAGRLMVGLRWWNEASETGESVWVFETADPQRYINPIDSKVFWMMLYGAPVLWVCLAVLALLKFQFLSLILVFIAVSLTVTNAMAYSRCDKFGKANNIVGQVSGGLLSRAARGTFLGRFM</sequence>
<reference key="1">
    <citation type="journal article" date="2004" name="Nature">
        <title>Genome evolution in yeasts.</title>
        <authorList>
            <person name="Dujon B."/>
            <person name="Sherman D."/>
            <person name="Fischer G."/>
            <person name="Durrens P."/>
            <person name="Casaregola S."/>
            <person name="Lafontaine I."/>
            <person name="de Montigny J."/>
            <person name="Marck C."/>
            <person name="Neuveglise C."/>
            <person name="Talla E."/>
            <person name="Goffard N."/>
            <person name="Frangeul L."/>
            <person name="Aigle M."/>
            <person name="Anthouard V."/>
            <person name="Babour A."/>
            <person name="Barbe V."/>
            <person name="Barnay S."/>
            <person name="Blanchin S."/>
            <person name="Beckerich J.-M."/>
            <person name="Beyne E."/>
            <person name="Bleykasten C."/>
            <person name="Boisrame A."/>
            <person name="Boyer J."/>
            <person name="Cattolico L."/>
            <person name="Confanioleri F."/>
            <person name="de Daruvar A."/>
            <person name="Despons L."/>
            <person name="Fabre E."/>
            <person name="Fairhead C."/>
            <person name="Ferry-Dumazet H."/>
            <person name="Groppi A."/>
            <person name="Hantraye F."/>
            <person name="Hennequin C."/>
            <person name="Jauniaux N."/>
            <person name="Joyet P."/>
            <person name="Kachouri R."/>
            <person name="Kerrest A."/>
            <person name="Koszul R."/>
            <person name="Lemaire M."/>
            <person name="Lesur I."/>
            <person name="Ma L."/>
            <person name="Muller H."/>
            <person name="Nicaud J.-M."/>
            <person name="Nikolski M."/>
            <person name="Oztas S."/>
            <person name="Ozier-Kalogeropoulos O."/>
            <person name="Pellenz S."/>
            <person name="Potier S."/>
            <person name="Richard G.-F."/>
            <person name="Straub M.-L."/>
            <person name="Suleau A."/>
            <person name="Swennen D."/>
            <person name="Tekaia F."/>
            <person name="Wesolowski-Louvel M."/>
            <person name="Westhof E."/>
            <person name="Wirth B."/>
            <person name="Zeniou-Meyer M."/>
            <person name="Zivanovic Y."/>
            <person name="Bolotin-Fukuhara M."/>
            <person name="Thierry A."/>
            <person name="Bouchier C."/>
            <person name="Caudron B."/>
            <person name="Scarpelli C."/>
            <person name="Gaillardin C."/>
            <person name="Weissenbach J."/>
            <person name="Wincker P."/>
            <person name="Souciet J.-L."/>
        </authorList>
    </citation>
    <scope>NUCLEOTIDE SEQUENCE [LARGE SCALE GENOMIC DNA]</scope>
    <source>
        <strain>CLIB 122 / E 150</strain>
    </source>
</reference>
<name>TVP23_YARLI</name>
<dbReference type="EMBL" id="CR382130">
    <property type="protein sequence ID" value="CAG81461.1"/>
    <property type="molecule type" value="Genomic_DNA"/>
</dbReference>
<dbReference type="RefSeq" id="XP_503257.1">
    <property type="nucleotide sequence ID" value="XM_503257.1"/>
</dbReference>
<dbReference type="FunCoup" id="Q6C7V5">
    <property type="interactions" value="409"/>
</dbReference>
<dbReference type="STRING" id="284591.Q6C7V5"/>
<dbReference type="EnsemblFungi" id="CAG81461">
    <property type="protein sequence ID" value="CAG81461"/>
    <property type="gene ID" value="YALI0_D25036g"/>
</dbReference>
<dbReference type="KEGG" id="yli:2910850"/>
<dbReference type="VEuPathDB" id="FungiDB:YALI0_D25036g"/>
<dbReference type="HOGENOM" id="CLU_074845_0_0_1"/>
<dbReference type="InParanoid" id="Q6C7V5"/>
<dbReference type="OMA" id="KMIWWID"/>
<dbReference type="OrthoDB" id="79949at4891"/>
<dbReference type="Proteomes" id="UP000001300">
    <property type="component" value="Chromosome D"/>
</dbReference>
<dbReference type="GO" id="GO:0000139">
    <property type="term" value="C:Golgi membrane"/>
    <property type="evidence" value="ECO:0000318"/>
    <property type="project" value="GO_Central"/>
</dbReference>
<dbReference type="GO" id="GO:0009306">
    <property type="term" value="P:protein secretion"/>
    <property type="evidence" value="ECO:0000318"/>
    <property type="project" value="GO_Central"/>
</dbReference>
<dbReference type="GO" id="GO:0016192">
    <property type="term" value="P:vesicle-mediated transport"/>
    <property type="evidence" value="ECO:0000318"/>
    <property type="project" value="GO_Central"/>
</dbReference>
<dbReference type="InterPro" id="IPR008564">
    <property type="entry name" value="TVP23-like"/>
</dbReference>
<dbReference type="PANTHER" id="PTHR13019">
    <property type="entry name" value="GOLGI APPARATUS MEMBRANE PROTEIN TVP23"/>
    <property type="match status" value="1"/>
</dbReference>
<dbReference type="PANTHER" id="PTHR13019:SF7">
    <property type="entry name" value="GOLGI APPARATUS MEMBRANE PROTEIN TVP23"/>
    <property type="match status" value="1"/>
</dbReference>
<dbReference type="Pfam" id="PF05832">
    <property type="entry name" value="DUF846"/>
    <property type="match status" value="1"/>
</dbReference>
<organism>
    <name type="scientific">Yarrowia lipolytica (strain CLIB 122 / E 150)</name>
    <name type="common">Yeast</name>
    <name type="synonym">Candida lipolytica</name>
    <dbReference type="NCBI Taxonomy" id="284591"/>
    <lineage>
        <taxon>Eukaryota</taxon>
        <taxon>Fungi</taxon>
        <taxon>Dikarya</taxon>
        <taxon>Ascomycota</taxon>
        <taxon>Saccharomycotina</taxon>
        <taxon>Dipodascomycetes</taxon>
        <taxon>Dipodascales</taxon>
        <taxon>Dipodascales incertae sedis</taxon>
        <taxon>Yarrowia</taxon>
    </lineage>
</organism>
<proteinExistence type="inferred from homology"/>
<comment type="function">
    <text evidence="1">Golgi membrane protein involved in vesicular trafficking.</text>
</comment>
<comment type="subcellular location">
    <subcellularLocation>
        <location evidence="1">Golgi apparatus membrane</location>
        <topology evidence="1">Multi-pass membrane protein</topology>
    </subcellularLocation>
</comment>
<comment type="similarity">
    <text evidence="3">Belongs to the TVP23 family.</text>
</comment>
<accession>Q6C7V5</accession>
<keyword id="KW-0333">Golgi apparatus</keyword>
<keyword id="KW-0472">Membrane</keyword>
<keyword id="KW-1185">Reference proteome</keyword>
<keyword id="KW-0812">Transmembrane</keyword>
<keyword id="KW-1133">Transmembrane helix</keyword>
<feature type="chain" id="PRO_0000343057" description="Golgi apparatus membrane protein TVP23">
    <location>
        <begin position="1"/>
        <end position="180"/>
    </location>
</feature>
<feature type="transmembrane region" description="Helical" evidence="2">
    <location>
        <begin position="13"/>
        <end position="35"/>
    </location>
</feature>
<feature type="transmembrane region" description="Helical" evidence="2">
    <location>
        <begin position="40"/>
        <end position="58"/>
    </location>
</feature>
<feature type="transmembrane region" description="Helical" evidence="2">
    <location>
        <begin position="101"/>
        <end position="121"/>
    </location>
</feature>
<feature type="transmembrane region" description="Helical" evidence="2">
    <location>
        <begin position="126"/>
        <end position="146"/>
    </location>
</feature>